<organism>
    <name type="scientific">Cereibacter sphaeroides (strain ATCC 17029 / ATH 2.4.9)</name>
    <name type="common">Rhodobacter sphaeroides</name>
    <dbReference type="NCBI Taxonomy" id="349101"/>
    <lineage>
        <taxon>Bacteria</taxon>
        <taxon>Pseudomonadati</taxon>
        <taxon>Pseudomonadota</taxon>
        <taxon>Alphaproteobacteria</taxon>
        <taxon>Rhodobacterales</taxon>
        <taxon>Paracoccaceae</taxon>
        <taxon>Cereibacter</taxon>
    </lineage>
</organism>
<keyword id="KW-0067">ATP-binding</keyword>
<keyword id="KW-0418">Kinase</keyword>
<keyword id="KW-0441">Lipid A biosynthesis</keyword>
<keyword id="KW-0444">Lipid biosynthesis</keyword>
<keyword id="KW-0443">Lipid metabolism</keyword>
<keyword id="KW-0547">Nucleotide-binding</keyword>
<keyword id="KW-0808">Transferase</keyword>
<evidence type="ECO:0000255" key="1">
    <source>
        <dbReference type="HAMAP-Rule" id="MF_00409"/>
    </source>
</evidence>
<protein>
    <recommendedName>
        <fullName evidence="1">Tetraacyldisaccharide 4'-kinase</fullName>
        <ecNumber evidence="1">2.7.1.130</ecNumber>
    </recommendedName>
    <alternativeName>
        <fullName evidence="1">Lipid A 4'-kinase</fullName>
    </alternativeName>
</protein>
<comment type="function">
    <text evidence="1">Transfers the gamma-phosphate of ATP to the 4'-position of a tetraacyldisaccharide 1-phosphate intermediate (termed DS-1-P) to form tetraacyldisaccharide 1,4'-bis-phosphate (lipid IVA).</text>
</comment>
<comment type="catalytic activity">
    <reaction evidence="1">
        <text>a lipid A disaccharide + ATP = a lipid IVA + ADP + H(+)</text>
        <dbReference type="Rhea" id="RHEA:67840"/>
        <dbReference type="ChEBI" id="CHEBI:15378"/>
        <dbReference type="ChEBI" id="CHEBI:30616"/>
        <dbReference type="ChEBI" id="CHEBI:176343"/>
        <dbReference type="ChEBI" id="CHEBI:176425"/>
        <dbReference type="ChEBI" id="CHEBI:456216"/>
        <dbReference type="EC" id="2.7.1.130"/>
    </reaction>
</comment>
<comment type="pathway">
    <text evidence="1">Glycolipid biosynthesis; lipid IV(A) biosynthesis; lipid IV(A) from (3R)-3-hydroxytetradecanoyl-[acyl-carrier-protein] and UDP-N-acetyl-alpha-D-glucosamine: step 6/6.</text>
</comment>
<comment type="similarity">
    <text evidence="1">Belongs to the LpxK family.</text>
</comment>
<feature type="chain" id="PRO_0000291233" description="Tetraacyldisaccharide 4'-kinase">
    <location>
        <begin position="1"/>
        <end position="332"/>
    </location>
</feature>
<feature type="binding site" evidence="1">
    <location>
        <begin position="54"/>
        <end position="61"/>
    </location>
    <ligand>
        <name>ATP</name>
        <dbReference type="ChEBI" id="CHEBI:30616"/>
    </ligand>
</feature>
<gene>
    <name evidence="1" type="primary">lpxK</name>
    <name type="ordered locus">Rsph17029_0113</name>
</gene>
<proteinExistence type="inferred from homology"/>
<sequence length="332" mass="35072">MRPPAFWFTPPDSPALAARLLAPLGQAYAAATARRLRAPGHRAGVPVICIGNLNAGGTGKTPTAIALMQRLAARGIEAHVVSRGYGGRLEGPVEVDARRHRAADVGDEPLLLAAFGRAWVARDRAAGVRAAEAAGAQAILLDDGFQNPSVVKDLSLIVVDAAVGFGNGRCLPAGPLREPVEAGLARADLLLSIGGPEAQRRFATDWPALPVPRLTGRLATLQMGMDWQGARVLAFAGIGRPEKFFASLRAEGAELLRAEALDDHQPLGEALMKRLEIEAMALGAQLVTTEKDAVRLPPSFRQKVLTLPVRLEFDDGAALDEALDRLGLAARS</sequence>
<accession>A3PFW7</accession>
<reference key="1">
    <citation type="submission" date="2007-02" db="EMBL/GenBank/DDBJ databases">
        <title>Complete sequence of chromosome 1 of Rhodobacter sphaeroides ATCC 17029.</title>
        <authorList>
            <person name="Copeland A."/>
            <person name="Lucas S."/>
            <person name="Lapidus A."/>
            <person name="Barry K."/>
            <person name="Detter J.C."/>
            <person name="Glavina del Rio T."/>
            <person name="Hammon N."/>
            <person name="Israni S."/>
            <person name="Dalin E."/>
            <person name="Tice H."/>
            <person name="Pitluck S."/>
            <person name="Kiss H."/>
            <person name="Brettin T."/>
            <person name="Bruce D."/>
            <person name="Han C."/>
            <person name="Tapia R."/>
            <person name="Gilna P."/>
            <person name="Schmutz J."/>
            <person name="Larimer F."/>
            <person name="Land M."/>
            <person name="Hauser L."/>
            <person name="Kyrpides N."/>
            <person name="Mikhailova N."/>
            <person name="Richardson P."/>
            <person name="Mackenzie C."/>
            <person name="Choudhary M."/>
            <person name="Donohue T.J."/>
            <person name="Kaplan S."/>
        </authorList>
    </citation>
    <scope>NUCLEOTIDE SEQUENCE [LARGE SCALE GENOMIC DNA]</scope>
    <source>
        <strain>ATCC 17029 / ATH 2.4.9</strain>
    </source>
</reference>
<name>LPXK_CERS1</name>
<dbReference type="EC" id="2.7.1.130" evidence="1"/>
<dbReference type="EMBL" id="CP000577">
    <property type="protein sequence ID" value="ABN75233.1"/>
    <property type="molecule type" value="Genomic_DNA"/>
</dbReference>
<dbReference type="RefSeq" id="WP_011840176.1">
    <property type="nucleotide sequence ID" value="NC_009049.1"/>
</dbReference>
<dbReference type="SMR" id="A3PFW7"/>
<dbReference type="KEGG" id="rsh:Rsph17029_0113"/>
<dbReference type="HOGENOM" id="CLU_038816_0_0_5"/>
<dbReference type="UniPathway" id="UPA00359">
    <property type="reaction ID" value="UER00482"/>
</dbReference>
<dbReference type="GO" id="GO:0005886">
    <property type="term" value="C:plasma membrane"/>
    <property type="evidence" value="ECO:0007669"/>
    <property type="project" value="TreeGrafter"/>
</dbReference>
<dbReference type="GO" id="GO:0005524">
    <property type="term" value="F:ATP binding"/>
    <property type="evidence" value="ECO:0007669"/>
    <property type="project" value="UniProtKB-UniRule"/>
</dbReference>
<dbReference type="GO" id="GO:0009029">
    <property type="term" value="F:tetraacyldisaccharide 4'-kinase activity"/>
    <property type="evidence" value="ECO:0007669"/>
    <property type="project" value="UniProtKB-UniRule"/>
</dbReference>
<dbReference type="GO" id="GO:0009245">
    <property type="term" value="P:lipid A biosynthetic process"/>
    <property type="evidence" value="ECO:0007669"/>
    <property type="project" value="UniProtKB-UniRule"/>
</dbReference>
<dbReference type="GO" id="GO:0009244">
    <property type="term" value="P:lipopolysaccharide core region biosynthetic process"/>
    <property type="evidence" value="ECO:0007669"/>
    <property type="project" value="TreeGrafter"/>
</dbReference>
<dbReference type="HAMAP" id="MF_00409">
    <property type="entry name" value="LpxK"/>
    <property type="match status" value="1"/>
</dbReference>
<dbReference type="InterPro" id="IPR003758">
    <property type="entry name" value="LpxK"/>
</dbReference>
<dbReference type="InterPro" id="IPR027417">
    <property type="entry name" value="P-loop_NTPase"/>
</dbReference>
<dbReference type="NCBIfam" id="TIGR00682">
    <property type="entry name" value="lpxK"/>
    <property type="match status" value="1"/>
</dbReference>
<dbReference type="PANTHER" id="PTHR42724">
    <property type="entry name" value="TETRAACYLDISACCHARIDE 4'-KINASE"/>
    <property type="match status" value="1"/>
</dbReference>
<dbReference type="PANTHER" id="PTHR42724:SF1">
    <property type="entry name" value="TETRAACYLDISACCHARIDE 4'-KINASE, MITOCHONDRIAL-RELATED"/>
    <property type="match status" value="1"/>
</dbReference>
<dbReference type="Pfam" id="PF02606">
    <property type="entry name" value="LpxK"/>
    <property type="match status" value="1"/>
</dbReference>
<dbReference type="SUPFAM" id="SSF52540">
    <property type="entry name" value="P-loop containing nucleoside triphosphate hydrolases"/>
    <property type="match status" value="1"/>
</dbReference>